<evidence type="ECO:0000255" key="1"/>
<evidence type="ECO:0000269" key="2">
    <source>
    </source>
</evidence>
<evidence type="ECO:0000269" key="3">
    <source>
    </source>
</evidence>
<evidence type="ECO:0000269" key="4">
    <source>
    </source>
</evidence>
<evidence type="ECO:0000269" key="5">
    <source>
    </source>
</evidence>
<evidence type="ECO:0000269" key="6">
    <source>
    </source>
</evidence>
<evidence type="ECO:0000303" key="7">
    <source>
    </source>
</evidence>
<evidence type="ECO:0000305" key="8"/>
<proteinExistence type="evidence at protein level"/>
<sequence length="439" mass="48257">MLPFLKAPADAPLMTDKYEIDARYRYWRRHILLTIWLGYALFYFTRKSFNAAVPEILANGVLSRSDIGLLATLFYITYGVSKFVSGIVSDRSNARYFMGIGLIATGIINILFGFSTSLWAFAVLWVLNAFFQGWGSPVCARLLTAWYSRTERGGWWALWNTAHNVGGALIPIVMAAAALHYGWRAGMMIAGCMAIVVGIFLCWRLRDRPQALGLPAVGEWRHDALEIAQQQEGAGLTRKEILTKYVLLNPYIWLLSFCYVLVYVVRAAINDWGNLYMSETLGVDLVTANTAVTMFELGGFIGALVAGWGSDKLFNGNRGPMNLIFAAGILLSVGSLWLMPFASYVMQATCFFTIGFFVFGPQMLIGMAAAECSHKEAAGAATGFVGLFAYLGASLAGWPLAKVLDTWHWSGFFVVISIAAGISALLLLPFLNAQTPREA</sequence>
<dbReference type="EMBL" id="M17102">
    <property type="protein sequence ID" value="AAA24722.1"/>
    <property type="status" value="ALT_INIT"/>
    <property type="molecule type" value="Genomic_DNA"/>
</dbReference>
<dbReference type="EMBL" id="M89479">
    <property type="protein sequence ID" value="AAA24726.1"/>
    <property type="molecule type" value="Genomic_DNA"/>
</dbReference>
<dbReference type="EMBL" id="L10328">
    <property type="protein sequence ID" value="AAA62019.1"/>
    <property type="status" value="ALT_INIT"/>
    <property type="molecule type" value="Genomic_DNA"/>
</dbReference>
<dbReference type="EMBL" id="U00096">
    <property type="protein sequence ID" value="AAC76690.2"/>
    <property type="molecule type" value="Genomic_DNA"/>
</dbReference>
<dbReference type="EMBL" id="AP009048">
    <property type="protein sequence ID" value="BAE77626.1"/>
    <property type="molecule type" value="Genomic_DNA"/>
</dbReference>
<dbReference type="PIR" id="D65168">
    <property type="entry name" value="RGECUC"/>
</dbReference>
<dbReference type="RefSeq" id="NP_418123.2">
    <property type="nucleotide sequence ID" value="NC_000913.3"/>
</dbReference>
<dbReference type="RefSeq" id="WP_000936566.1">
    <property type="nucleotide sequence ID" value="NZ_STEB01000015.1"/>
</dbReference>
<dbReference type="SMR" id="P09836"/>
<dbReference type="BioGRID" id="4262582">
    <property type="interactions" value="27"/>
</dbReference>
<dbReference type="FunCoup" id="P09836">
    <property type="interactions" value="513"/>
</dbReference>
<dbReference type="STRING" id="511145.b3667"/>
<dbReference type="TCDB" id="2.A.1.4.4">
    <property type="family name" value="the major facilitator superfamily (mfs)"/>
</dbReference>
<dbReference type="PaxDb" id="511145-b3667"/>
<dbReference type="EnsemblBacteria" id="AAC76690">
    <property type="protein sequence ID" value="AAC76690"/>
    <property type="gene ID" value="b3667"/>
</dbReference>
<dbReference type="GeneID" id="948184"/>
<dbReference type="KEGG" id="ecj:JW3642"/>
<dbReference type="KEGG" id="eco:b3667"/>
<dbReference type="KEGG" id="ecoc:C3026_19875"/>
<dbReference type="PATRIC" id="fig|511145.12.peg.3789"/>
<dbReference type="EchoBASE" id="EB1046"/>
<dbReference type="eggNOG" id="COG2271">
    <property type="taxonomic scope" value="Bacteria"/>
</dbReference>
<dbReference type="HOGENOM" id="CLU_001265_31_0_6"/>
<dbReference type="InParanoid" id="P09836"/>
<dbReference type="OMA" id="NAWFQGW"/>
<dbReference type="OrthoDB" id="9766638at2"/>
<dbReference type="PhylomeDB" id="P09836"/>
<dbReference type="BioCyc" id="EcoCyc:UHPC-MONOMER"/>
<dbReference type="PRO" id="PR:P09836"/>
<dbReference type="Proteomes" id="UP000000625">
    <property type="component" value="Chromosome"/>
</dbReference>
<dbReference type="GO" id="GO:0016020">
    <property type="term" value="C:membrane"/>
    <property type="evidence" value="ECO:0000314"/>
    <property type="project" value="EcoliWiki"/>
</dbReference>
<dbReference type="GO" id="GO:0005886">
    <property type="term" value="C:plasma membrane"/>
    <property type="evidence" value="ECO:0000314"/>
    <property type="project" value="EcoliWiki"/>
</dbReference>
<dbReference type="GO" id="GO:0061513">
    <property type="term" value="F:glucose 6-phosphate:phosphate antiporter activity"/>
    <property type="evidence" value="ECO:0000318"/>
    <property type="project" value="GO_Central"/>
</dbReference>
<dbReference type="GO" id="GO:0015760">
    <property type="term" value="P:glucose-6-phosphate transport"/>
    <property type="evidence" value="ECO:0000318"/>
    <property type="project" value="GO_Central"/>
</dbReference>
<dbReference type="GO" id="GO:0035435">
    <property type="term" value="P:phosphate ion transmembrane transport"/>
    <property type="evidence" value="ECO:0000318"/>
    <property type="project" value="GO_Central"/>
</dbReference>
<dbReference type="GO" id="GO:0000160">
    <property type="term" value="P:phosphorelay signal transduction system"/>
    <property type="evidence" value="ECO:0000315"/>
    <property type="project" value="EcoCyc"/>
</dbReference>
<dbReference type="CDD" id="cd17488">
    <property type="entry name" value="MFS_UhpC"/>
    <property type="match status" value="1"/>
</dbReference>
<dbReference type="FunFam" id="1.20.1250.20:FF:000007">
    <property type="entry name" value="Glycerol-3-phosphate transporter"/>
    <property type="match status" value="1"/>
</dbReference>
<dbReference type="FunFam" id="1.20.1250.20:FF:000110">
    <property type="entry name" value="Regulatory protein uhpC"/>
    <property type="match status" value="1"/>
</dbReference>
<dbReference type="Gene3D" id="1.20.1250.20">
    <property type="entry name" value="MFS general substrate transporter like domains"/>
    <property type="match status" value="2"/>
</dbReference>
<dbReference type="InterPro" id="IPR011701">
    <property type="entry name" value="MFS"/>
</dbReference>
<dbReference type="InterPro" id="IPR020846">
    <property type="entry name" value="MFS_dom"/>
</dbReference>
<dbReference type="InterPro" id="IPR036259">
    <property type="entry name" value="MFS_trans_sf"/>
</dbReference>
<dbReference type="InterPro" id="IPR051337">
    <property type="entry name" value="OPA_Antiporter"/>
</dbReference>
<dbReference type="InterPro" id="IPR021159">
    <property type="entry name" value="Sugar-P_transporter_CS"/>
</dbReference>
<dbReference type="InterPro" id="IPR000849">
    <property type="entry name" value="Sugar_P_transporter"/>
</dbReference>
<dbReference type="NCBIfam" id="TIGR00881">
    <property type="entry name" value="2A0104"/>
    <property type="match status" value="1"/>
</dbReference>
<dbReference type="NCBIfam" id="NF008661">
    <property type="entry name" value="PRK11663.1"/>
    <property type="match status" value="1"/>
</dbReference>
<dbReference type="PANTHER" id="PTHR43826">
    <property type="entry name" value="GLUCOSE-6-PHOSPHATE EXCHANGER SLC37A4"/>
    <property type="match status" value="1"/>
</dbReference>
<dbReference type="PANTHER" id="PTHR43826:SF3">
    <property type="entry name" value="GLUCOSE-6-PHOSPHATE EXCHANGER SLC37A4"/>
    <property type="match status" value="1"/>
</dbReference>
<dbReference type="Pfam" id="PF07690">
    <property type="entry name" value="MFS_1"/>
    <property type="match status" value="1"/>
</dbReference>
<dbReference type="PIRSF" id="PIRSF002808">
    <property type="entry name" value="Hexose_phosphate_transp"/>
    <property type="match status" value="1"/>
</dbReference>
<dbReference type="SUPFAM" id="SSF103473">
    <property type="entry name" value="MFS general substrate transporter"/>
    <property type="match status" value="1"/>
</dbReference>
<dbReference type="PROSITE" id="PS00942">
    <property type="entry name" value="GLPT"/>
    <property type="match status" value="1"/>
</dbReference>
<dbReference type="PROSITE" id="PS50850">
    <property type="entry name" value="MFS"/>
    <property type="match status" value="1"/>
</dbReference>
<gene>
    <name evidence="7" type="primary">uhpC</name>
    <name type="ordered locus">b3667</name>
    <name type="ordered locus">JW3642</name>
</gene>
<reference key="1">
    <citation type="journal article" date="1987" name="J. Bacteriol.">
        <title>Nucleotide sequence of the uhp region of Escherichia coli.</title>
        <authorList>
            <person name="Friedrich M.J."/>
            <person name="Kadner R.J."/>
        </authorList>
    </citation>
    <scope>NUCLEOTIDE SEQUENCE [GENOMIC DNA]</scope>
</reference>
<reference key="2">
    <citation type="submission" date="1990-08" db="EMBL/GenBank/DDBJ databases">
        <authorList>
            <person name="Kadner R.J."/>
        </authorList>
    </citation>
    <scope>SEQUENCE REVISION</scope>
</reference>
<reference key="3">
    <citation type="journal article" date="1992" name="J. Bacteriol.">
        <title>Structure and function of the uhp genes for the sugar phosphate transport system in Escherichia coli and Salmonella typhimurium.</title>
        <authorList>
            <person name="Island M.D."/>
            <person name="Wei B.-Y."/>
            <person name="Kadner R.J."/>
        </authorList>
    </citation>
    <scope>NUCLEOTIDE SEQUENCE [GENOMIC DNA]</scope>
</reference>
<reference key="4">
    <citation type="journal article" date="1993" name="Genomics">
        <title>DNA sequence and analysis of 136 kilobases of the Escherichia coli genome: organizational symmetry around the origin of replication.</title>
        <authorList>
            <person name="Burland V.D."/>
            <person name="Plunkett G. III"/>
            <person name="Daniels D.L."/>
            <person name="Blattner F.R."/>
        </authorList>
    </citation>
    <scope>NUCLEOTIDE SEQUENCE [LARGE SCALE GENOMIC DNA]</scope>
    <source>
        <strain>K12 / MG1655 / ATCC 47076</strain>
    </source>
</reference>
<reference key="5">
    <citation type="journal article" date="1997" name="Science">
        <title>The complete genome sequence of Escherichia coli K-12.</title>
        <authorList>
            <person name="Blattner F.R."/>
            <person name="Plunkett G. III"/>
            <person name="Bloch C.A."/>
            <person name="Perna N.T."/>
            <person name="Burland V."/>
            <person name="Riley M."/>
            <person name="Collado-Vides J."/>
            <person name="Glasner J.D."/>
            <person name="Rode C.K."/>
            <person name="Mayhew G.F."/>
            <person name="Gregor J."/>
            <person name="Davis N.W."/>
            <person name="Kirkpatrick H.A."/>
            <person name="Goeden M.A."/>
            <person name="Rose D.J."/>
            <person name="Mau B."/>
            <person name="Shao Y."/>
        </authorList>
    </citation>
    <scope>NUCLEOTIDE SEQUENCE [LARGE SCALE GENOMIC DNA]</scope>
    <source>
        <strain>K12 / MG1655 / ATCC 47076</strain>
    </source>
</reference>
<reference key="6">
    <citation type="journal article" date="2006" name="Mol. Syst. Biol.">
        <title>Highly accurate genome sequences of Escherichia coli K-12 strains MG1655 and W3110.</title>
        <authorList>
            <person name="Hayashi K."/>
            <person name="Morooka N."/>
            <person name="Yamamoto Y."/>
            <person name="Fujita K."/>
            <person name="Isono K."/>
            <person name="Choi S."/>
            <person name="Ohtsubo E."/>
            <person name="Baba T."/>
            <person name="Wanner B.L."/>
            <person name="Mori H."/>
            <person name="Horiuchi T."/>
        </authorList>
    </citation>
    <scope>NUCLEOTIDE SEQUENCE [LARGE SCALE GENOMIC DNA]</scope>
    <source>
        <strain>K12 / W3110 / ATCC 27325 / DSM 5911</strain>
    </source>
</reference>
<reference key="7">
    <citation type="journal article" date="1987" name="J. Bacteriol.">
        <title>Identification of uhp polypeptides and evidence for their role in exogenous induction of the sugar phosphate transport system of Escherichia coli K-12.</title>
        <authorList>
            <person name="Weston L.A."/>
            <person name="Kadner R.J."/>
        </authorList>
    </citation>
    <scope>IDENTIFICATION</scope>
    <scope>FUNCTION</scope>
</reference>
<reference key="8">
    <citation type="journal article" date="1993" name="J. Bacteriol.">
        <title>Interplay between the membrane-associated UhpB and UhpC regulatory proteins.</title>
        <authorList>
            <person name="Island M.D."/>
            <person name="Kadner R.J."/>
        </authorList>
    </citation>
    <scope>FUNCTION</scope>
</reference>
<reference key="9">
    <citation type="journal article" date="2000" name="J. Bacteriol.">
        <title>The histidine kinase domain of UhpB inhibits UhpA action at the Escherichia coli uhpT promoter.</title>
        <authorList>
            <person name="Wright J.S."/>
            <person name="Olekhnovich I.N."/>
            <person name="Touchie G."/>
            <person name="Kadner R.J."/>
        </authorList>
    </citation>
    <scope>FUNCTION</scope>
</reference>
<reference key="10">
    <citation type="journal article" date="2001" name="Microbiology">
        <title>Glucose-6-phosphate-dependent phosphoryl flow through the Uhp two-component regulatory system.</title>
        <authorList>
            <person name="Verhamme D.T."/>
            <person name="Arents J.C."/>
            <person name="Postma P.W."/>
            <person name="Crielaard W."/>
            <person name="Hellingwerf K.J."/>
        </authorList>
    </citation>
    <scope>FUNCTION</scope>
</reference>
<reference key="11">
    <citation type="journal article" date="2005" name="Science">
        <title>Global topology analysis of the Escherichia coli inner membrane proteome.</title>
        <authorList>
            <person name="Daley D.O."/>
            <person name="Rapp M."/>
            <person name="Granseth E."/>
            <person name="Melen K."/>
            <person name="Drew D."/>
            <person name="von Heijne G."/>
        </authorList>
    </citation>
    <scope>TOPOLOGY [LARGE SCALE ANALYSIS]</scope>
    <scope>SUBCELLULAR LOCATION</scope>
    <source>
        <strain>K12 / MG1655 / ATCC 47076</strain>
    </source>
</reference>
<organism>
    <name type="scientific">Escherichia coli (strain K12)</name>
    <dbReference type="NCBI Taxonomy" id="83333"/>
    <lineage>
        <taxon>Bacteria</taxon>
        <taxon>Pseudomonadati</taxon>
        <taxon>Pseudomonadota</taxon>
        <taxon>Gammaproteobacteria</taxon>
        <taxon>Enterobacterales</taxon>
        <taxon>Enterobacteriaceae</taxon>
        <taxon>Escherichia</taxon>
    </lineage>
</organism>
<keyword id="KW-0997">Cell inner membrane</keyword>
<keyword id="KW-1003">Cell membrane</keyword>
<keyword id="KW-0472">Membrane</keyword>
<keyword id="KW-1185">Reference proteome</keyword>
<keyword id="KW-0812">Transmembrane</keyword>
<keyword id="KW-1133">Transmembrane helix</keyword>
<accession>P09836</accession>
<accession>P76728</accession>
<accession>Q2M7Y0</accession>
<feature type="chain" id="PRO_0000199881" description="Membrane sensor protein UhpC">
    <location>
        <begin position="1"/>
        <end position="439"/>
    </location>
</feature>
<feature type="topological domain" description="Cytoplasmic" evidence="8">
    <location>
        <begin position="1"/>
        <end position="25"/>
    </location>
</feature>
<feature type="transmembrane region" description="Helical" evidence="1">
    <location>
        <begin position="26"/>
        <end position="45"/>
    </location>
</feature>
<feature type="topological domain" description="Periplasmic" evidence="8">
    <location>
        <begin position="46"/>
        <end position="66"/>
    </location>
</feature>
<feature type="transmembrane region" description="Helical" evidence="1">
    <location>
        <begin position="67"/>
        <end position="87"/>
    </location>
</feature>
<feature type="topological domain" description="Cytoplasmic" evidence="8">
    <location>
        <begin position="88"/>
        <end position="95"/>
    </location>
</feature>
<feature type="transmembrane region" description="Helical" evidence="1">
    <location>
        <begin position="96"/>
        <end position="118"/>
    </location>
</feature>
<feature type="topological domain" description="Periplasmic" evidence="8">
    <location>
        <begin position="119"/>
        <end position="121"/>
    </location>
</feature>
<feature type="transmembrane region" description="Helical" evidence="1">
    <location>
        <begin position="122"/>
        <end position="144"/>
    </location>
</feature>
<feature type="topological domain" description="Cytoplasmic" evidence="8">
    <location>
        <begin position="145"/>
        <end position="162"/>
    </location>
</feature>
<feature type="transmembrane region" description="Helical" evidence="1">
    <location>
        <begin position="163"/>
        <end position="183"/>
    </location>
</feature>
<feature type="topological domain" description="Periplasmic" evidence="8">
    <location>
        <position position="184"/>
    </location>
</feature>
<feature type="transmembrane region" description="Helical" evidence="1">
    <location>
        <begin position="185"/>
        <end position="205"/>
    </location>
</feature>
<feature type="topological domain" description="Cytoplasmic" evidence="8">
    <location>
        <begin position="206"/>
        <end position="244"/>
    </location>
</feature>
<feature type="transmembrane region" description="Helical" evidence="1">
    <location>
        <begin position="245"/>
        <end position="265"/>
    </location>
</feature>
<feature type="topological domain" description="Periplasmic" evidence="8">
    <location>
        <begin position="266"/>
        <end position="289"/>
    </location>
</feature>
<feature type="transmembrane region" description="Helical" evidence="1">
    <location>
        <begin position="290"/>
        <end position="310"/>
    </location>
</feature>
<feature type="topological domain" description="Cytoplasmic" evidence="8">
    <location>
        <begin position="311"/>
        <end position="322"/>
    </location>
</feature>
<feature type="transmembrane region" description="Helical" evidence="1">
    <location>
        <begin position="323"/>
        <end position="343"/>
    </location>
</feature>
<feature type="topological domain" description="Periplasmic" evidence="8">
    <location>
        <begin position="344"/>
        <end position="349"/>
    </location>
</feature>
<feature type="transmembrane region" description="Helical" evidence="1">
    <location>
        <begin position="350"/>
        <end position="370"/>
    </location>
</feature>
<feature type="topological domain" description="Cytoplasmic" evidence="8">
    <location>
        <begin position="371"/>
        <end position="379"/>
    </location>
</feature>
<feature type="transmembrane region" description="Helical" evidence="1">
    <location>
        <begin position="380"/>
        <end position="400"/>
    </location>
</feature>
<feature type="topological domain" description="Periplasmic" evidence="8">
    <location>
        <begin position="401"/>
        <end position="410"/>
    </location>
</feature>
<feature type="transmembrane region" description="Helical" evidence="1">
    <location>
        <begin position="411"/>
        <end position="431"/>
    </location>
</feature>
<feature type="topological domain" description="Cytoplasmic" evidence="4">
    <location>
        <begin position="432"/>
        <end position="439"/>
    </location>
</feature>
<protein>
    <recommendedName>
        <fullName evidence="8">Membrane sensor protein UhpC</fullName>
    </recommendedName>
</protein>
<comment type="function">
    <text evidence="2 3 5 6">Part of the UhpABC signaling cascade that controls the expression of the hexose phosphate transporter UhpT. UhpC senses external glucose-6-phosphate and interacts with the histidine kinase UhpB, leading to the stimulation of the autokinase activity of UhpB.</text>
</comment>
<comment type="subcellular location">
    <subcellularLocation>
        <location evidence="4">Cell inner membrane</location>
        <topology evidence="1">Multi-pass membrane protein</topology>
    </subcellularLocation>
</comment>
<comment type="similarity">
    <text evidence="8">Belongs to the major facilitator superfamily. Organophosphate:Pi antiporter (OPA) (TC 2.A.1.4) family.</text>
</comment>
<comment type="sequence caution" evidence="8">
    <conflict type="erroneous initiation">
        <sequence resource="EMBL-CDS" id="AAA24722"/>
    </conflict>
    <text>Extended N-terminus.</text>
</comment>
<comment type="sequence caution" evidence="8">
    <conflict type="erroneous initiation">
        <sequence resource="EMBL-CDS" id="AAA62019"/>
    </conflict>
    <text>Extended N-terminus.</text>
</comment>
<name>UHPC_ECOLI</name>